<protein>
    <recommendedName>
        <fullName>Uncharacterized protein C16C4.04</fullName>
    </recommendedName>
</protein>
<gene>
    <name type="ORF">SPCC16C4.04</name>
</gene>
<sequence length="266" mass="30735">MASATLPMDYKTPFGYAYKLYVEGKDEHSLYILDNYLKNANCSENTYEQALILCLTIMCEQRRSWTEMEEKLLHNYQGKIPDSIVVNWIITYLENSEFTKENYAQMINSLYRYQDAILKSELKDSILPKLVNCACSVQLTEPLKAILANSRGELENSLLLRIQAQEEELKMNLERSKTPDPSEDEGEFALTLKLQFSKVSRLINQGLTPLLSRLQLIDKNIKIVGAIFGIILLLFRLKKYISHSKKSAFSPQRWKFLLDQFLLAIS</sequence>
<keyword id="KW-0597">Phosphoprotein</keyword>
<keyword id="KW-1185">Reference proteome</keyword>
<evidence type="ECO:0000269" key="1">
    <source>
    </source>
</evidence>
<dbReference type="EMBL" id="CU329672">
    <property type="protein sequence ID" value="CAA20743.1"/>
    <property type="molecule type" value="Genomic_DNA"/>
</dbReference>
<dbReference type="PIR" id="T41094">
    <property type="entry name" value="T41094"/>
</dbReference>
<dbReference type="RefSeq" id="NP_587914.1">
    <property type="nucleotide sequence ID" value="NM_001022905.2"/>
</dbReference>
<dbReference type="SMR" id="O74449"/>
<dbReference type="BioGRID" id="275563">
    <property type="interactions" value="1"/>
</dbReference>
<dbReference type="iPTMnet" id="O74449"/>
<dbReference type="PaxDb" id="4896-SPCC16C4.04.1"/>
<dbReference type="EnsemblFungi" id="SPCC16C4.04.1">
    <property type="protein sequence ID" value="SPCC16C4.04.1:pep"/>
    <property type="gene ID" value="SPCC16C4.04"/>
</dbReference>
<dbReference type="KEGG" id="spo:2538989"/>
<dbReference type="PomBase" id="SPCC16C4.04"/>
<dbReference type="VEuPathDB" id="FungiDB:SPCC16C4.04"/>
<dbReference type="eggNOG" id="KOG4810">
    <property type="taxonomic scope" value="Eukaryota"/>
</dbReference>
<dbReference type="HOGENOM" id="CLU_1046473_0_0_1"/>
<dbReference type="InParanoid" id="O74449"/>
<dbReference type="OMA" id="SENTYEQ"/>
<dbReference type="PRO" id="PR:O74449"/>
<dbReference type="Proteomes" id="UP000002485">
    <property type="component" value="Chromosome III"/>
</dbReference>
<dbReference type="GO" id="GO:0005778">
    <property type="term" value="C:peroxisomal membrane"/>
    <property type="evidence" value="ECO:0000266"/>
    <property type="project" value="PomBase"/>
</dbReference>
<dbReference type="GO" id="GO:0043495">
    <property type="term" value="F:protein-membrane adaptor activity"/>
    <property type="evidence" value="ECO:0000266"/>
    <property type="project" value="PomBase"/>
</dbReference>
<dbReference type="GO" id="GO:0016562">
    <property type="term" value="P:protein import into peroxisome matrix, receptor recycling"/>
    <property type="evidence" value="ECO:0000266"/>
    <property type="project" value="PomBase"/>
</dbReference>
<reference key="1">
    <citation type="journal article" date="2002" name="Nature">
        <title>The genome sequence of Schizosaccharomyces pombe.</title>
        <authorList>
            <person name="Wood V."/>
            <person name="Gwilliam R."/>
            <person name="Rajandream M.A."/>
            <person name="Lyne M.H."/>
            <person name="Lyne R."/>
            <person name="Stewart A."/>
            <person name="Sgouros J.G."/>
            <person name="Peat N."/>
            <person name="Hayles J."/>
            <person name="Baker S.G."/>
            <person name="Basham D."/>
            <person name="Bowman S."/>
            <person name="Brooks K."/>
            <person name="Brown D."/>
            <person name="Brown S."/>
            <person name="Chillingworth T."/>
            <person name="Churcher C.M."/>
            <person name="Collins M."/>
            <person name="Connor R."/>
            <person name="Cronin A."/>
            <person name="Davis P."/>
            <person name="Feltwell T."/>
            <person name="Fraser A."/>
            <person name="Gentles S."/>
            <person name="Goble A."/>
            <person name="Hamlin N."/>
            <person name="Harris D.E."/>
            <person name="Hidalgo J."/>
            <person name="Hodgson G."/>
            <person name="Holroyd S."/>
            <person name="Hornsby T."/>
            <person name="Howarth S."/>
            <person name="Huckle E.J."/>
            <person name="Hunt S."/>
            <person name="Jagels K."/>
            <person name="James K.D."/>
            <person name="Jones L."/>
            <person name="Jones M."/>
            <person name="Leather S."/>
            <person name="McDonald S."/>
            <person name="McLean J."/>
            <person name="Mooney P."/>
            <person name="Moule S."/>
            <person name="Mungall K.L."/>
            <person name="Murphy L.D."/>
            <person name="Niblett D."/>
            <person name="Odell C."/>
            <person name="Oliver K."/>
            <person name="O'Neil S."/>
            <person name="Pearson D."/>
            <person name="Quail M.A."/>
            <person name="Rabbinowitsch E."/>
            <person name="Rutherford K.M."/>
            <person name="Rutter S."/>
            <person name="Saunders D."/>
            <person name="Seeger K."/>
            <person name="Sharp S."/>
            <person name="Skelton J."/>
            <person name="Simmonds M.N."/>
            <person name="Squares R."/>
            <person name="Squares S."/>
            <person name="Stevens K."/>
            <person name="Taylor K."/>
            <person name="Taylor R.G."/>
            <person name="Tivey A."/>
            <person name="Walsh S.V."/>
            <person name="Warren T."/>
            <person name="Whitehead S."/>
            <person name="Woodward J.R."/>
            <person name="Volckaert G."/>
            <person name="Aert R."/>
            <person name="Robben J."/>
            <person name="Grymonprez B."/>
            <person name="Weltjens I."/>
            <person name="Vanstreels E."/>
            <person name="Rieger M."/>
            <person name="Schaefer M."/>
            <person name="Mueller-Auer S."/>
            <person name="Gabel C."/>
            <person name="Fuchs M."/>
            <person name="Duesterhoeft A."/>
            <person name="Fritzc C."/>
            <person name="Holzer E."/>
            <person name="Moestl D."/>
            <person name="Hilbert H."/>
            <person name="Borzym K."/>
            <person name="Langer I."/>
            <person name="Beck A."/>
            <person name="Lehrach H."/>
            <person name="Reinhardt R."/>
            <person name="Pohl T.M."/>
            <person name="Eger P."/>
            <person name="Zimmermann W."/>
            <person name="Wedler H."/>
            <person name="Wambutt R."/>
            <person name="Purnelle B."/>
            <person name="Goffeau A."/>
            <person name="Cadieu E."/>
            <person name="Dreano S."/>
            <person name="Gloux S."/>
            <person name="Lelaure V."/>
            <person name="Mottier S."/>
            <person name="Galibert F."/>
            <person name="Aves S.J."/>
            <person name="Xiang Z."/>
            <person name="Hunt C."/>
            <person name="Moore K."/>
            <person name="Hurst S.M."/>
            <person name="Lucas M."/>
            <person name="Rochet M."/>
            <person name="Gaillardin C."/>
            <person name="Tallada V.A."/>
            <person name="Garzon A."/>
            <person name="Thode G."/>
            <person name="Daga R.R."/>
            <person name="Cruzado L."/>
            <person name="Jimenez J."/>
            <person name="Sanchez M."/>
            <person name="del Rey F."/>
            <person name="Benito J."/>
            <person name="Dominguez A."/>
            <person name="Revuelta J.L."/>
            <person name="Moreno S."/>
            <person name="Armstrong J."/>
            <person name="Forsburg S.L."/>
            <person name="Cerutti L."/>
            <person name="Lowe T."/>
            <person name="McCombie W.R."/>
            <person name="Paulsen I."/>
            <person name="Potashkin J."/>
            <person name="Shpakovski G.V."/>
            <person name="Ussery D."/>
            <person name="Barrell B.G."/>
            <person name="Nurse P."/>
        </authorList>
    </citation>
    <scope>NUCLEOTIDE SEQUENCE [LARGE SCALE GENOMIC DNA]</scope>
    <source>
        <strain>972 / ATCC 24843</strain>
    </source>
</reference>
<reference key="2">
    <citation type="journal article" date="2008" name="J. Proteome Res.">
        <title>Phosphoproteome analysis of fission yeast.</title>
        <authorList>
            <person name="Wilson-Grady J.T."/>
            <person name="Villen J."/>
            <person name="Gygi S.P."/>
        </authorList>
    </citation>
    <scope>PHOSPHORYLATION [LARGE SCALE ANALYSIS] AT SER-176 AND THR-178</scope>
    <scope>IDENTIFICATION BY MASS SPECTROMETRY</scope>
</reference>
<name>YCG4_SCHPO</name>
<accession>O74449</accession>
<proteinExistence type="evidence at protein level"/>
<feature type="chain" id="PRO_0000116545" description="Uncharacterized protein C16C4.04">
    <location>
        <begin position="1"/>
        <end position="266"/>
    </location>
</feature>
<feature type="modified residue" description="Phosphoserine" evidence="1">
    <location>
        <position position="176"/>
    </location>
</feature>
<feature type="modified residue" description="Phosphothreonine" evidence="1">
    <location>
        <position position="178"/>
    </location>
</feature>
<organism>
    <name type="scientific">Schizosaccharomyces pombe (strain 972 / ATCC 24843)</name>
    <name type="common">Fission yeast</name>
    <dbReference type="NCBI Taxonomy" id="284812"/>
    <lineage>
        <taxon>Eukaryota</taxon>
        <taxon>Fungi</taxon>
        <taxon>Dikarya</taxon>
        <taxon>Ascomycota</taxon>
        <taxon>Taphrinomycotina</taxon>
        <taxon>Schizosaccharomycetes</taxon>
        <taxon>Schizosaccharomycetales</taxon>
        <taxon>Schizosaccharomycetaceae</taxon>
        <taxon>Schizosaccharomyces</taxon>
    </lineage>
</organism>